<feature type="chain" id="PRO_0000177345" description="Large ribosomal subunit protein bL35">
    <location>
        <begin position="1"/>
        <end position="64"/>
    </location>
</feature>
<feature type="region of interest" description="Disordered" evidence="2">
    <location>
        <begin position="1"/>
        <end position="56"/>
    </location>
</feature>
<feature type="compositionally biased region" description="Basic residues" evidence="2">
    <location>
        <begin position="23"/>
        <end position="35"/>
    </location>
</feature>
<gene>
    <name evidence="1" type="primary">rpmI</name>
    <name type="ordered locus">CCA_00770</name>
</gene>
<reference key="1">
    <citation type="journal article" date="2003" name="Nucleic Acids Res.">
        <title>Genome sequence of Chlamydophila caviae (Chlamydia psittaci GPIC): examining the role of niche-specific genes in the evolution of the Chlamydiaceae.</title>
        <authorList>
            <person name="Read T.D."/>
            <person name="Myers G.S.A."/>
            <person name="Brunham R.C."/>
            <person name="Nelson W.C."/>
            <person name="Paulsen I.T."/>
            <person name="Heidelberg J.F."/>
            <person name="Holtzapple E.K."/>
            <person name="Khouri H.M."/>
            <person name="Federova N.B."/>
            <person name="Carty H.A."/>
            <person name="Umayam L.A."/>
            <person name="Haft D.H."/>
            <person name="Peterson J.D."/>
            <person name="Beanan M.J."/>
            <person name="White O."/>
            <person name="Salzberg S.L."/>
            <person name="Hsia R.-C."/>
            <person name="McClarty G."/>
            <person name="Rank R.G."/>
            <person name="Bavoil P.M."/>
            <person name="Fraser C.M."/>
        </authorList>
    </citation>
    <scope>NUCLEOTIDE SEQUENCE [LARGE SCALE GENOMIC DNA]</scope>
    <source>
        <strain>ATCC VR-813 / DSM 19441 / 03DC25 / GPIC</strain>
    </source>
</reference>
<protein>
    <recommendedName>
        <fullName evidence="1">Large ribosomal subunit protein bL35</fullName>
    </recommendedName>
    <alternativeName>
        <fullName evidence="3">50S ribosomal protein L35</fullName>
    </alternativeName>
</protein>
<dbReference type="EMBL" id="AE015925">
    <property type="protein sequence ID" value="AAP05511.1"/>
    <property type="molecule type" value="Genomic_DNA"/>
</dbReference>
<dbReference type="RefSeq" id="WP_011006725.1">
    <property type="nucleotide sequence ID" value="NC_003361.3"/>
</dbReference>
<dbReference type="SMR" id="Q822B3"/>
<dbReference type="STRING" id="227941.CCA_00770"/>
<dbReference type="GeneID" id="93024293"/>
<dbReference type="KEGG" id="cca:CCA_00770"/>
<dbReference type="eggNOG" id="COG0291">
    <property type="taxonomic scope" value="Bacteria"/>
</dbReference>
<dbReference type="HOGENOM" id="CLU_169643_3_0_0"/>
<dbReference type="OrthoDB" id="47476at2"/>
<dbReference type="Proteomes" id="UP000002193">
    <property type="component" value="Chromosome"/>
</dbReference>
<dbReference type="GO" id="GO:0022625">
    <property type="term" value="C:cytosolic large ribosomal subunit"/>
    <property type="evidence" value="ECO:0007669"/>
    <property type="project" value="TreeGrafter"/>
</dbReference>
<dbReference type="GO" id="GO:0003735">
    <property type="term" value="F:structural constituent of ribosome"/>
    <property type="evidence" value="ECO:0007669"/>
    <property type="project" value="InterPro"/>
</dbReference>
<dbReference type="GO" id="GO:0006412">
    <property type="term" value="P:translation"/>
    <property type="evidence" value="ECO:0007669"/>
    <property type="project" value="UniProtKB-UniRule"/>
</dbReference>
<dbReference type="FunFam" id="4.10.410.60:FF:000001">
    <property type="entry name" value="50S ribosomal protein L35"/>
    <property type="match status" value="1"/>
</dbReference>
<dbReference type="Gene3D" id="4.10.410.60">
    <property type="match status" value="1"/>
</dbReference>
<dbReference type="HAMAP" id="MF_00514">
    <property type="entry name" value="Ribosomal_bL35"/>
    <property type="match status" value="1"/>
</dbReference>
<dbReference type="InterPro" id="IPR001706">
    <property type="entry name" value="Ribosomal_bL35"/>
</dbReference>
<dbReference type="InterPro" id="IPR021137">
    <property type="entry name" value="Ribosomal_bL35-like"/>
</dbReference>
<dbReference type="InterPro" id="IPR018265">
    <property type="entry name" value="Ribosomal_bL35_CS"/>
</dbReference>
<dbReference type="InterPro" id="IPR037229">
    <property type="entry name" value="Ribosomal_bL35_sf"/>
</dbReference>
<dbReference type="NCBIfam" id="TIGR00001">
    <property type="entry name" value="rpmI_bact"/>
    <property type="match status" value="1"/>
</dbReference>
<dbReference type="PANTHER" id="PTHR33343">
    <property type="entry name" value="54S RIBOSOMAL PROTEIN BL35M"/>
    <property type="match status" value="1"/>
</dbReference>
<dbReference type="PANTHER" id="PTHR33343:SF1">
    <property type="entry name" value="LARGE RIBOSOMAL SUBUNIT PROTEIN BL35M"/>
    <property type="match status" value="1"/>
</dbReference>
<dbReference type="Pfam" id="PF01632">
    <property type="entry name" value="Ribosomal_L35p"/>
    <property type="match status" value="1"/>
</dbReference>
<dbReference type="PRINTS" id="PR00064">
    <property type="entry name" value="RIBOSOMALL35"/>
</dbReference>
<dbReference type="SUPFAM" id="SSF143034">
    <property type="entry name" value="L35p-like"/>
    <property type="match status" value="1"/>
</dbReference>
<dbReference type="PROSITE" id="PS00936">
    <property type="entry name" value="RIBOSOMAL_L35"/>
    <property type="match status" value="1"/>
</dbReference>
<keyword id="KW-0687">Ribonucleoprotein</keyword>
<keyword id="KW-0689">Ribosomal protein</keyword>
<accession>Q822B3</accession>
<comment type="similarity">
    <text evidence="1">Belongs to the bacterial ribosomal protein bL35 family.</text>
</comment>
<organism>
    <name type="scientific">Chlamydia caviae (strain ATCC VR-813 / DSM 19441 / 03DC25 / GPIC)</name>
    <name type="common">Chlamydophila caviae</name>
    <dbReference type="NCBI Taxonomy" id="227941"/>
    <lineage>
        <taxon>Bacteria</taxon>
        <taxon>Pseudomonadati</taxon>
        <taxon>Chlamydiota</taxon>
        <taxon>Chlamydiia</taxon>
        <taxon>Chlamydiales</taxon>
        <taxon>Chlamydiaceae</taxon>
        <taxon>Chlamydia/Chlamydophila group</taxon>
        <taxon>Chlamydia</taxon>
    </lineage>
</organism>
<sequence>MPKMKSNKSVAARFKLTGSGQLKRTRPGKRHKLSKKSSQEKRNLSKQPLVDKGQVGMYKRMMLV</sequence>
<evidence type="ECO:0000255" key="1">
    <source>
        <dbReference type="HAMAP-Rule" id="MF_00514"/>
    </source>
</evidence>
<evidence type="ECO:0000256" key="2">
    <source>
        <dbReference type="SAM" id="MobiDB-lite"/>
    </source>
</evidence>
<evidence type="ECO:0000305" key="3"/>
<proteinExistence type="inferred from homology"/>
<name>RL35_CHLCV</name>